<name>WDR27_HUMAN</name>
<organism>
    <name type="scientific">Homo sapiens</name>
    <name type="common">Human</name>
    <dbReference type="NCBI Taxonomy" id="9606"/>
    <lineage>
        <taxon>Eukaryota</taxon>
        <taxon>Metazoa</taxon>
        <taxon>Chordata</taxon>
        <taxon>Craniata</taxon>
        <taxon>Vertebrata</taxon>
        <taxon>Euteleostomi</taxon>
        <taxon>Mammalia</taxon>
        <taxon>Eutheria</taxon>
        <taxon>Euarchontoglires</taxon>
        <taxon>Primates</taxon>
        <taxon>Haplorrhini</taxon>
        <taxon>Catarrhini</taxon>
        <taxon>Hominidae</taxon>
        <taxon>Homo</taxon>
    </lineage>
</organism>
<feature type="chain" id="PRO_0000306831" description="WD repeat-containing protein 27">
    <location>
        <begin position="1"/>
        <end position="827"/>
    </location>
</feature>
<feature type="repeat" description="WD 1">
    <location>
        <begin position="3"/>
        <end position="57"/>
    </location>
</feature>
<feature type="repeat" description="WD 2">
    <location>
        <begin position="62"/>
        <end position="101"/>
    </location>
</feature>
<feature type="repeat" description="WD 3">
    <location>
        <begin position="112"/>
        <end position="151"/>
    </location>
</feature>
<feature type="repeat" description="WD 4">
    <location>
        <begin position="155"/>
        <end position="194"/>
    </location>
</feature>
<feature type="repeat" description="WD 5">
    <location>
        <begin position="201"/>
        <end position="237"/>
    </location>
</feature>
<feature type="repeat" description="WD 6">
    <location>
        <begin position="292"/>
        <end position="337"/>
    </location>
</feature>
<feature type="repeat" description="WD 7">
    <location>
        <begin position="344"/>
        <end position="387"/>
    </location>
</feature>
<feature type="repeat" description="WD 8">
    <location>
        <begin position="502"/>
        <end position="542"/>
    </location>
</feature>
<feature type="repeat" description="WD 9">
    <location>
        <begin position="546"/>
        <end position="584"/>
    </location>
</feature>
<feature type="repeat" description="WD 10">
    <location>
        <begin position="590"/>
        <end position="629"/>
    </location>
</feature>
<feature type="repeat" description="WD 11">
    <location>
        <begin position="646"/>
        <end position="687"/>
    </location>
</feature>
<feature type="repeat" description="WD 12">
    <location>
        <begin position="698"/>
        <end position="740"/>
    </location>
</feature>
<feature type="repeat" description="WD 13">
    <location>
        <begin position="746"/>
        <end position="784"/>
    </location>
</feature>
<feature type="repeat" description="WD 14">
    <location>
        <begin position="788"/>
        <end position="826"/>
    </location>
</feature>
<feature type="splice variant" id="VSP_028510" description="In isoform 2." evidence="2">
    <location>
        <begin position="111"/>
        <end position="207"/>
    </location>
</feature>
<feature type="splice variant" id="VSP_028511" description="In isoform 3." evidence="2">
    <original>GL</original>
    <variation>GK</variation>
    <location>
        <begin position="111"/>
        <end position="112"/>
    </location>
</feature>
<feature type="splice variant" id="VSP_028512" description="In isoform 3." evidence="2">
    <location>
        <begin position="113"/>
        <end position="827"/>
    </location>
</feature>
<feature type="splice variant" id="VSP_040796" description="In isoform 4." evidence="2">
    <original>E</original>
    <variation>EQRFSVTYIERPDVNNRHKVPPPTFLHTFSQ</variation>
    <location>
        <position position="152"/>
    </location>
</feature>
<feature type="splice variant" id="VSP_040797" description="In isoform 4." evidence="2">
    <original>LATATLDGKLQLFLAE</original>
    <variation>MESRSVAHAGVQWHDLGSLQPPPSRFKQFFCLSLPSSWDYSLPQLPWMVNSSSF</variation>
    <location>
        <begin position="812"/>
        <end position="827"/>
    </location>
</feature>
<feature type="sequence variant" id="VAR_035317" description="In dbSNP:rs4236176." evidence="1">
    <original>L</original>
    <variation>P</variation>
    <location>
        <position position="133"/>
    </location>
</feature>
<feature type="sequence variant" id="VAR_035318" description="In dbSNP:rs35895089.">
    <original>V</original>
    <variation>L</variation>
    <location>
        <position position="393"/>
    </location>
</feature>
<feature type="sequence variant" id="VAR_035319" description="In dbSNP:rs3800544." evidence="1">
    <original>R</original>
    <variation>H</variation>
    <location>
        <position position="437"/>
    </location>
</feature>
<feature type="sequence variant" id="VAR_035320" description="In dbSNP:rs34313252.">
    <original>P</original>
    <variation>L</variation>
    <location>
        <position position="470"/>
    </location>
</feature>
<feature type="sequence variant" id="VAR_035321" description="In dbSNP:rs9396946.">
    <original>A</original>
    <variation>V</variation>
    <location>
        <position position="697"/>
    </location>
</feature>
<feature type="sequence conflict" description="In Ref. 2; BC040606." evidence="3" ref="2">
    <original>T</original>
    <variation>A</variation>
    <location>
        <position position="153"/>
    </location>
</feature>
<feature type="sequence conflict" description="In Ref. 2; AAI31634/AAI42983." evidence="3" ref="2">
    <original>T</original>
    <variation>S</variation>
    <location>
        <position position="512"/>
    </location>
</feature>
<feature type="sequence conflict" description="In Ref. 2; BC040606." evidence="3" ref="2">
    <original>R</original>
    <variation>C</variation>
    <location sequence="A2RRH5-4">
        <position position="845"/>
    </location>
</feature>
<feature type="sequence conflict" description="In Ref. 2; BC040606." evidence="3" ref="2">
    <original>L</original>
    <variation>F</variation>
    <location sequence="A2RRH5-4">
        <position position="875"/>
    </location>
</feature>
<gene>
    <name type="primary">WDR27</name>
</gene>
<accession>A2RRH5</accession>
<accession>A5PLM8</accession>
<accession>C9JGV0</accession>
<accession>Q5T066</accession>
<protein>
    <recommendedName>
        <fullName>WD repeat-containing protein 27</fullName>
    </recommendedName>
</protein>
<comment type="interaction">
    <interactant intactId="EBI-9476803">
        <id>A2RRH5</id>
    </interactant>
    <interactant intactId="EBI-722989">
        <id>P08243</id>
        <label>ASNS</label>
    </interactant>
    <organismsDiffer>false</organismsDiffer>
    <experiments>3</experiments>
</comment>
<comment type="alternative products">
    <event type="alternative splicing"/>
    <isoform>
        <id>A2RRH5-1</id>
        <name>1</name>
        <sequence type="displayed"/>
    </isoform>
    <isoform>
        <id>A2RRH5-2</id>
        <name>2</name>
        <sequence type="described" ref="VSP_028510"/>
    </isoform>
    <isoform>
        <id>A2RRH5-3</id>
        <name>3</name>
        <sequence type="described" ref="VSP_028511 VSP_028512"/>
    </isoform>
    <isoform>
        <id>A2RRH5-4</id>
        <name>4</name>
        <sequence type="described" ref="VSP_040796 VSP_040797"/>
    </isoform>
</comment>
<dbReference type="EMBL" id="AL031315">
    <property type="status" value="NOT_ANNOTATED_CDS"/>
    <property type="molecule type" value="Genomic_DNA"/>
</dbReference>
<dbReference type="EMBL" id="AL135910">
    <property type="status" value="NOT_ANNOTATED_CDS"/>
    <property type="molecule type" value="Genomic_DNA"/>
</dbReference>
<dbReference type="EMBL" id="AL441927">
    <property type="status" value="NOT_ANNOTATED_CDS"/>
    <property type="molecule type" value="Genomic_DNA"/>
</dbReference>
<dbReference type="EMBL" id="AL513547">
    <property type="status" value="NOT_ANNOTATED_CDS"/>
    <property type="molecule type" value="Genomic_DNA"/>
</dbReference>
<dbReference type="EMBL" id="BC040606">
    <property type="status" value="NOT_ANNOTATED_CDS"/>
    <property type="molecule type" value="mRNA"/>
</dbReference>
<dbReference type="EMBL" id="BC131633">
    <property type="protein sequence ID" value="AAI31634.1"/>
    <property type="molecule type" value="mRNA"/>
</dbReference>
<dbReference type="EMBL" id="BC142982">
    <property type="protein sequence ID" value="AAI42983.1"/>
    <property type="molecule type" value="mRNA"/>
</dbReference>
<dbReference type="CCDS" id="CCDS47520.2">
    <molecule id="A2RRH5-4"/>
</dbReference>
<dbReference type="CCDS" id="CCDS56459.1">
    <molecule id="A2RRH5-2"/>
</dbReference>
<dbReference type="RefSeq" id="NP_001189479.1">
    <molecule id="A2RRH5-2"/>
    <property type="nucleotide sequence ID" value="NM_001202550.2"/>
</dbReference>
<dbReference type="RefSeq" id="NP_872358.4">
    <molecule id="A2RRH5-4"/>
    <property type="nucleotide sequence ID" value="NM_182552.4"/>
</dbReference>
<dbReference type="BioGRID" id="128986">
    <property type="interactions" value="23"/>
</dbReference>
<dbReference type="FunCoup" id="A2RRH5">
    <property type="interactions" value="794"/>
</dbReference>
<dbReference type="IntAct" id="A2RRH5">
    <property type="interactions" value="4"/>
</dbReference>
<dbReference type="STRING" id="9606.ENSP00000416289"/>
<dbReference type="GlyGen" id="A2RRH5">
    <property type="glycosylation" value="1 site, 1 O-linked glycan (1 site)"/>
</dbReference>
<dbReference type="iPTMnet" id="A2RRH5"/>
<dbReference type="PhosphoSitePlus" id="A2RRH5"/>
<dbReference type="BioMuta" id="WDR27"/>
<dbReference type="jPOST" id="A2RRH5"/>
<dbReference type="MassIVE" id="A2RRH5"/>
<dbReference type="PaxDb" id="9606-ENSP00000416289"/>
<dbReference type="PeptideAtlas" id="A2RRH5"/>
<dbReference type="TopDownProteomics" id="A2RRH5-2">
    <molecule id="A2RRH5-2"/>
</dbReference>
<dbReference type="Antibodypedia" id="49469">
    <property type="antibodies" value="99 antibodies from 17 providers"/>
</dbReference>
<dbReference type="DNASU" id="253769"/>
<dbReference type="Ensembl" id="ENST00000423258.5">
    <molecule id="A2RRH5-2"/>
    <property type="protein sequence ID" value="ENSP00000397869.1"/>
    <property type="gene ID" value="ENSG00000184465.16"/>
</dbReference>
<dbReference type="Ensembl" id="ENST00000448612.6">
    <molecule id="A2RRH5-4"/>
    <property type="protein sequence ID" value="ENSP00000416289.1"/>
    <property type="gene ID" value="ENSG00000184465.16"/>
</dbReference>
<dbReference type="GeneID" id="253769"/>
<dbReference type="KEGG" id="hsa:253769"/>
<dbReference type="MANE-Select" id="ENST00000448612.6">
    <molecule id="A2RRH5-4"/>
    <property type="protein sequence ID" value="ENSP00000416289.1"/>
    <property type="RefSeq nucleotide sequence ID" value="NM_182552.5"/>
    <property type="RefSeq protein sequence ID" value="NP_872358.4"/>
</dbReference>
<dbReference type="UCSC" id="uc003qwx.4">
    <molecule id="A2RRH5-1"/>
    <property type="organism name" value="human"/>
</dbReference>
<dbReference type="AGR" id="HGNC:21248"/>
<dbReference type="CTD" id="253769"/>
<dbReference type="DisGeNET" id="253769"/>
<dbReference type="GeneCards" id="WDR27"/>
<dbReference type="HGNC" id="HGNC:21248">
    <property type="gene designation" value="WDR27"/>
</dbReference>
<dbReference type="HPA" id="ENSG00000184465">
    <property type="expression patterns" value="Low tissue specificity"/>
</dbReference>
<dbReference type="MIM" id="620936">
    <property type="type" value="gene"/>
</dbReference>
<dbReference type="neXtProt" id="NX_A2RRH5"/>
<dbReference type="OpenTargets" id="ENSG00000184465"/>
<dbReference type="PharmGKB" id="PA134875091"/>
<dbReference type="VEuPathDB" id="HostDB:ENSG00000184465"/>
<dbReference type="eggNOG" id="KOG0266">
    <property type="taxonomic scope" value="Eukaryota"/>
</dbReference>
<dbReference type="GeneTree" id="ENSGT00390000012017"/>
<dbReference type="HOGENOM" id="CLU_018295_0_0_1"/>
<dbReference type="InParanoid" id="A2RRH5"/>
<dbReference type="OMA" id="FAQFYYI"/>
<dbReference type="OrthoDB" id="20669at2759"/>
<dbReference type="PAN-GO" id="A2RRH5">
    <property type="GO annotations" value="0 GO annotations based on evolutionary models"/>
</dbReference>
<dbReference type="PhylomeDB" id="A2RRH5"/>
<dbReference type="TreeFam" id="TF351563"/>
<dbReference type="PathwayCommons" id="A2RRH5"/>
<dbReference type="SignaLink" id="A2RRH5"/>
<dbReference type="BioGRID-ORCS" id="253769">
    <property type="hits" value="5 hits in 1160 CRISPR screens"/>
</dbReference>
<dbReference type="ChiTaRS" id="WDR27">
    <property type="organism name" value="human"/>
</dbReference>
<dbReference type="GenomeRNAi" id="253769"/>
<dbReference type="Pharos" id="A2RRH5">
    <property type="development level" value="Tdark"/>
</dbReference>
<dbReference type="PRO" id="PR:A2RRH5"/>
<dbReference type="Proteomes" id="UP000005640">
    <property type="component" value="Chromosome 6"/>
</dbReference>
<dbReference type="RNAct" id="A2RRH5">
    <property type="molecule type" value="protein"/>
</dbReference>
<dbReference type="Bgee" id="ENSG00000184465">
    <property type="expression patterns" value="Expressed in right uterine tube and 158 other cell types or tissues"/>
</dbReference>
<dbReference type="ExpressionAtlas" id="A2RRH5">
    <property type="expression patterns" value="baseline and differential"/>
</dbReference>
<dbReference type="GO" id="GO:0005654">
    <property type="term" value="C:nucleoplasm"/>
    <property type="evidence" value="ECO:0000314"/>
    <property type="project" value="HPA"/>
</dbReference>
<dbReference type="FunFam" id="2.130.10.10:FF:000995">
    <property type="entry name" value="WD repeat domain 27"/>
    <property type="match status" value="1"/>
</dbReference>
<dbReference type="FunFam" id="2.130.10.10:FF:001315">
    <property type="entry name" value="WD repeat domain 27"/>
    <property type="match status" value="1"/>
</dbReference>
<dbReference type="Gene3D" id="2.130.10.10">
    <property type="entry name" value="YVTN repeat-like/Quinoprotein amine dehydrogenase"/>
    <property type="match status" value="3"/>
</dbReference>
<dbReference type="InterPro" id="IPR011047">
    <property type="entry name" value="Quinoprotein_ADH-like_sf"/>
</dbReference>
<dbReference type="InterPro" id="IPR015943">
    <property type="entry name" value="WD40/YVTN_repeat-like_dom_sf"/>
</dbReference>
<dbReference type="InterPro" id="IPR001680">
    <property type="entry name" value="WD40_rpt"/>
</dbReference>
<dbReference type="InterPro" id="IPR042411">
    <property type="entry name" value="WDR27"/>
</dbReference>
<dbReference type="PANTHER" id="PTHR44525">
    <property type="entry name" value="WD REPEAT-CONTAINING PROTEIN 27"/>
    <property type="match status" value="1"/>
</dbReference>
<dbReference type="PANTHER" id="PTHR44525:SF1">
    <property type="entry name" value="WD REPEAT-CONTAINING PROTEIN 27"/>
    <property type="match status" value="1"/>
</dbReference>
<dbReference type="Pfam" id="PF00400">
    <property type="entry name" value="WD40"/>
    <property type="match status" value="4"/>
</dbReference>
<dbReference type="SMART" id="SM00320">
    <property type="entry name" value="WD40"/>
    <property type="match status" value="10"/>
</dbReference>
<dbReference type="SUPFAM" id="SSF50998">
    <property type="entry name" value="Quinoprotein alcohol dehydrogenase-like"/>
    <property type="match status" value="1"/>
</dbReference>
<dbReference type="PROSITE" id="PS50082">
    <property type="entry name" value="WD_REPEATS_2"/>
    <property type="match status" value="3"/>
</dbReference>
<dbReference type="PROSITE" id="PS50294">
    <property type="entry name" value="WD_REPEATS_REGION"/>
    <property type="match status" value="2"/>
</dbReference>
<sequence length="827" mass="90038">MENPQDIFSSNGGCLSDIVIEKYLVESKESVSHVQLACSMQDCAFPLDGTELCIWNTKDPSHQLLILRGHHQPITAMAFGNKVNPLLICSASLDYVIMWNLDECREKVLQGLVPRGTVMGSLLGKVLCLQLSLDDHVVAVCAGNKIFMLDIETQAVRAELQGHLGPVTAVEFCPWRAGTLISASEDRGFKVWDHCTGSLIYSSSVLSAYPLLSLFIDAESRQLVTGCADGQLWIFSLMDGHHYRRVARVDLRKKTETFSTRRVKSGLCSQPEESQLPSTSALGKGEQVEVTFPVLRLAPCDLSLIPNSACGCLSSENTRCVWIGSSVGLFVFNLANLEVEAALYYKDFQSLSILLAGSCALRNRTADQKVLCLLASLFGGKIAVLEINPAALVRAQQCPSMGQSLSVPASSCVLPTSPLYLGIAKEKSTKAASEQRRAARNVMKDQRLVFHSKVRSSGYASAPHVTMFSPKTNIKSEGKGSSRSRSSCAREAYPVECAVPTKPGPQVAAAPTCTRVCCIQYSGDGQWLACGLANHLLLVFDASLTGTPAVFSGHDGAVNAVCWSQDRRWLLSAARDGTLRMWSARGAELALLLGKDMFSKPIQSAQFYYIDAFILLSSGPEFQLLRYHIDTCKDEIKRYKQKSKSKLICRLSTTGAVDMTSLSAVNDFYSHIVLAAGRNRTVEVFDLNAGCSAAVIAEAHSRPVHQICQNKGSSFTTQQPQAYNLFLTTAIGDGMRLWDLRTLRCERHFEGHPTRGYPCGIAFSPCGRFAACGAEDRHAYVYEMGSSTFSHRLAGHTDTVTGVAFNPSAPQLATATLDGKLQLFLAE</sequence>
<reference key="1">
    <citation type="journal article" date="2003" name="Nature">
        <title>The DNA sequence and analysis of human chromosome 6.</title>
        <authorList>
            <person name="Mungall A.J."/>
            <person name="Palmer S.A."/>
            <person name="Sims S.K."/>
            <person name="Edwards C.A."/>
            <person name="Ashurst J.L."/>
            <person name="Wilming L."/>
            <person name="Jones M.C."/>
            <person name="Horton R."/>
            <person name="Hunt S.E."/>
            <person name="Scott C.E."/>
            <person name="Gilbert J.G.R."/>
            <person name="Clamp M.E."/>
            <person name="Bethel G."/>
            <person name="Milne S."/>
            <person name="Ainscough R."/>
            <person name="Almeida J.P."/>
            <person name="Ambrose K.D."/>
            <person name="Andrews T.D."/>
            <person name="Ashwell R.I.S."/>
            <person name="Babbage A.K."/>
            <person name="Bagguley C.L."/>
            <person name="Bailey J."/>
            <person name="Banerjee R."/>
            <person name="Barker D.J."/>
            <person name="Barlow K.F."/>
            <person name="Bates K."/>
            <person name="Beare D.M."/>
            <person name="Beasley H."/>
            <person name="Beasley O."/>
            <person name="Bird C.P."/>
            <person name="Blakey S.E."/>
            <person name="Bray-Allen S."/>
            <person name="Brook J."/>
            <person name="Brown A.J."/>
            <person name="Brown J.Y."/>
            <person name="Burford D.C."/>
            <person name="Burrill W."/>
            <person name="Burton J."/>
            <person name="Carder C."/>
            <person name="Carter N.P."/>
            <person name="Chapman J.C."/>
            <person name="Clark S.Y."/>
            <person name="Clark G."/>
            <person name="Clee C.M."/>
            <person name="Clegg S."/>
            <person name="Cobley V."/>
            <person name="Collier R.E."/>
            <person name="Collins J.E."/>
            <person name="Colman L.K."/>
            <person name="Corby N.R."/>
            <person name="Coville G.J."/>
            <person name="Culley K.M."/>
            <person name="Dhami P."/>
            <person name="Davies J."/>
            <person name="Dunn M."/>
            <person name="Earthrowl M.E."/>
            <person name="Ellington A.E."/>
            <person name="Evans K.A."/>
            <person name="Faulkner L."/>
            <person name="Francis M.D."/>
            <person name="Frankish A."/>
            <person name="Frankland J."/>
            <person name="French L."/>
            <person name="Garner P."/>
            <person name="Garnett J."/>
            <person name="Ghori M.J."/>
            <person name="Gilby L.M."/>
            <person name="Gillson C.J."/>
            <person name="Glithero R.J."/>
            <person name="Grafham D.V."/>
            <person name="Grant M."/>
            <person name="Gribble S."/>
            <person name="Griffiths C."/>
            <person name="Griffiths M.N.D."/>
            <person name="Hall R."/>
            <person name="Halls K.S."/>
            <person name="Hammond S."/>
            <person name="Harley J.L."/>
            <person name="Hart E.A."/>
            <person name="Heath P.D."/>
            <person name="Heathcott R."/>
            <person name="Holmes S.J."/>
            <person name="Howden P.J."/>
            <person name="Howe K.L."/>
            <person name="Howell G.R."/>
            <person name="Huckle E."/>
            <person name="Humphray S.J."/>
            <person name="Humphries M.D."/>
            <person name="Hunt A.R."/>
            <person name="Johnson C.M."/>
            <person name="Joy A.A."/>
            <person name="Kay M."/>
            <person name="Keenan S.J."/>
            <person name="Kimberley A.M."/>
            <person name="King A."/>
            <person name="Laird G.K."/>
            <person name="Langford C."/>
            <person name="Lawlor S."/>
            <person name="Leongamornlert D.A."/>
            <person name="Leversha M."/>
            <person name="Lloyd C.R."/>
            <person name="Lloyd D.M."/>
            <person name="Loveland J.E."/>
            <person name="Lovell J."/>
            <person name="Martin S."/>
            <person name="Mashreghi-Mohammadi M."/>
            <person name="Maslen G.L."/>
            <person name="Matthews L."/>
            <person name="McCann O.T."/>
            <person name="McLaren S.J."/>
            <person name="McLay K."/>
            <person name="McMurray A."/>
            <person name="Moore M.J.F."/>
            <person name="Mullikin J.C."/>
            <person name="Niblett D."/>
            <person name="Nickerson T."/>
            <person name="Novik K.L."/>
            <person name="Oliver K."/>
            <person name="Overton-Larty E.K."/>
            <person name="Parker A."/>
            <person name="Patel R."/>
            <person name="Pearce A.V."/>
            <person name="Peck A.I."/>
            <person name="Phillimore B.J.C.T."/>
            <person name="Phillips S."/>
            <person name="Plumb R.W."/>
            <person name="Porter K.M."/>
            <person name="Ramsey Y."/>
            <person name="Ranby S.A."/>
            <person name="Rice C.M."/>
            <person name="Ross M.T."/>
            <person name="Searle S.M."/>
            <person name="Sehra H.K."/>
            <person name="Sheridan E."/>
            <person name="Skuce C.D."/>
            <person name="Smith S."/>
            <person name="Smith M."/>
            <person name="Spraggon L."/>
            <person name="Squares S.L."/>
            <person name="Steward C.A."/>
            <person name="Sycamore N."/>
            <person name="Tamlyn-Hall G."/>
            <person name="Tester J."/>
            <person name="Theaker A.J."/>
            <person name="Thomas D.W."/>
            <person name="Thorpe A."/>
            <person name="Tracey A."/>
            <person name="Tromans A."/>
            <person name="Tubby B."/>
            <person name="Wall M."/>
            <person name="Wallis J.M."/>
            <person name="West A.P."/>
            <person name="White S.S."/>
            <person name="Whitehead S.L."/>
            <person name="Whittaker H."/>
            <person name="Wild A."/>
            <person name="Willey D.J."/>
            <person name="Wilmer T.E."/>
            <person name="Wood J.M."/>
            <person name="Wray P.W."/>
            <person name="Wyatt J.C."/>
            <person name="Young L."/>
            <person name="Younger R.M."/>
            <person name="Bentley D.R."/>
            <person name="Coulson A."/>
            <person name="Durbin R.M."/>
            <person name="Hubbard T."/>
            <person name="Sulston J.E."/>
            <person name="Dunham I."/>
            <person name="Rogers J."/>
            <person name="Beck S."/>
        </authorList>
    </citation>
    <scope>NUCLEOTIDE SEQUENCE [LARGE SCALE GENOMIC DNA]</scope>
</reference>
<reference key="2">
    <citation type="journal article" date="2004" name="Genome Res.">
        <title>The status, quality, and expansion of the NIH full-length cDNA project: the Mammalian Gene Collection (MGC).</title>
        <authorList>
            <consortium name="The MGC Project Team"/>
        </authorList>
    </citation>
    <scope>NUCLEOTIDE SEQUENCE [LARGE SCALE MRNA] (ISOFORMS 2; 3 AND 4)</scope>
    <scope>VARIANTS PRO-133 AND HIS-437</scope>
</reference>
<evidence type="ECO:0000269" key="1">
    <source>
    </source>
</evidence>
<evidence type="ECO:0000303" key="2">
    <source>
    </source>
</evidence>
<evidence type="ECO:0000305" key="3"/>
<keyword id="KW-0025">Alternative splicing</keyword>
<keyword id="KW-1267">Proteomics identification</keyword>
<keyword id="KW-1185">Reference proteome</keyword>
<keyword id="KW-0677">Repeat</keyword>
<keyword id="KW-0853">WD repeat</keyword>
<proteinExistence type="evidence at protein level"/>